<comment type="function">
    <text evidence="3 4 6 7 8 9 11">Involved in control of cell fate and pattern formation along the anterior-posterior axis, acting mainly in the tail (PubMed:10049576, PubMed:1879361, PubMed:8101474). Required during embryonic and postembryonic development (PubMed:1879361). Essential for the determination of specific neurons, including the PLM touch neurons (PubMed:12835398, PubMed:8101474). Plays a role in neural fate specification in the hermaphrodite-specific neuron (HSN)/PHB neuron lineage, acting in concert with T-box protein tbx-2 and the asymmetric cell division protein ham-1 (PubMed:18505863). Required for male gonadal fate determination, acting in parallel with a WNT/beta-catenin pathway, perhaps by recruiting pop-1 to male-specific gonadal target genes (PubMed:20553900). Involved in development of the hermaphrodite hindgut, and for the response to rectal infection by the coryneform bacterium M.nematophilum (PubMed:19232338).</text>
</comment>
<comment type="subunit">
    <text evidence="9">Interacts with the TCF transcription factor pop-1.</text>
</comment>
<comment type="subcellular location">
    <subcellularLocation>
        <location evidence="3">Nucleus</location>
    </subcellularLocation>
</comment>
<comment type="alternative products">
    <event type="alternative splicing"/>
    <isoform>
        <id>P17486-1</id>
        <name evidence="17">b</name>
        <sequence type="displayed"/>
    </isoform>
    <isoform>
        <id>P17486-2</id>
        <name evidence="16">a</name>
        <sequence type="described" ref="VSP_015689"/>
    </isoform>
    <isoform>
        <id>P17486-3</id>
        <name evidence="18">c</name>
        <sequence type="described" ref="VSP_015688"/>
    </isoform>
</comment>
<comment type="developmental stage">
    <text evidence="3 5 9 11">Expressed throughout postembryonic development and adulthood (at protein level) (PubMed:10049576). In young larvae (10 h posthatching), expressed in five rectal epithelial cells, three left-right pairs of neurons, and four to six bilateral pairs of body-wall muscle cells, in the posterior body region (at protein level) (PubMed:10049576). At the same developmental stage, also expressed in the pair of hermaphrodite-specific neurons (HSN), in the mid-body adjacent to the gonad (at protein level) (PubMed:10049576). In early larvae, expressed in the male tail, and in hermaphrodite Ll stage larvae (0-2.5 hr post-hatching) in the most posterior body region and the tail (PubMed:17574230, PubMed:8101474). Expressed in most if not all somatic cells in the male gonad, with the exception of the linker cell (LC) and distal tip cells (DTCs) and their progenitors (PubMed:20553900).</text>
</comment>
<comment type="disruption phenotype">
    <text evidence="8">Fails to swell on exposure to the rectal pathogen M.nematophilum, a coryneform bacterium.</text>
</comment>
<comment type="similarity">
    <text evidence="14">Belongs to the Abd-B homeobox family.</text>
</comment>
<reference key="1">
    <citation type="journal article" date="1993" name="Cell">
        <title>A homeotic gene cluster patterns the anteroposterior body axis of C. elegans.</title>
        <authorList>
            <person name="Wang B.B."/>
            <person name="Mueller-Immergluck M.M."/>
            <person name="Austin J."/>
            <person name="Robinson N.T."/>
            <person name="Chisholm A.D."/>
            <person name="Kenyon C."/>
        </authorList>
    </citation>
    <scope>NUCLEOTIDE SEQUENCE [MRNA] (ISOFORM B)</scope>
    <scope>FUNCTION</scope>
    <scope>DEVELOPMENTAL STAGE</scope>
    <scope>MUTAGENESIS OF ARG-163</scope>
</reference>
<reference key="2">
    <citation type="journal article" date="1994" name="Nature">
        <title>2.2 Mb of contiguous nucleotide sequence from chromosome III of C. elegans.</title>
        <authorList>
            <person name="Wilson R."/>
            <person name="Ainscough R."/>
            <person name="Anderson K."/>
            <person name="Baynes C."/>
            <person name="Berks M."/>
            <person name="Bonfield J."/>
            <person name="Burton J."/>
            <person name="Connell M."/>
            <person name="Copsey T."/>
            <person name="Cooper J."/>
            <person name="Coulson A."/>
            <person name="Craxton M."/>
            <person name="Dear S."/>
            <person name="Du Z."/>
            <person name="Durbin R."/>
            <person name="Favello A."/>
            <person name="Fraser A."/>
            <person name="Fulton L."/>
            <person name="Gardner A."/>
            <person name="Green P."/>
            <person name="Hawkins T."/>
            <person name="Hillier L."/>
            <person name="Jier M."/>
            <person name="Johnston L."/>
            <person name="Jones M."/>
            <person name="Kershaw J."/>
            <person name="Kirsten J."/>
            <person name="Laisster N."/>
            <person name="Latreille P."/>
            <person name="Lightning J."/>
            <person name="Lloyd C."/>
            <person name="Mortimore B."/>
            <person name="O'Callaghan M."/>
            <person name="Parsons J."/>
            <person name="Percy C."/>
            <person name="Rifken L."/>
            <person name="Roopra A."/>
            <person name="Saunders D."/>
            <person name="Shownkeen R."/>
            <person name="Sims M."/>
            <person name="Smaldon N."/>
            <person name="Smith A."/>
            <person name="Smith M."/>
            <person name="Sonnhammer E."/>
            <person name="Staden R."/>
            <person name="Sulston J."/>
            <person name="Thierry-Mieg J."/>
            <person name="Thomas K."/>
            <person name="Vaudin M."/>
            <person name="Vaughan K."/>
            <person name="Waterston R."/>
            <person name="Watson A."/>
            <person name="Weinstock L."/>
            <person name="Wilkinson-Sproat J."/>
            <person name="Wohldman P."/>
        </authorList>
    </citation>
    <scope>NUCLEOTIDE SEQUENCE [LARGE SCALE GENOMIC DNA]</scope>
    <source>
        <strain>Bristol N2</strain>
    </source>
</reference>
<reference evidence="15" key="3">
    <citation type="journal article" date="1998" name="Science">
        <title>Genome sequence of the nematode C. elegans: a platform for investigating biology.</title>
        <authorList>
            <consortium name="The C. elegans sequencing consortium"/>
        </authorList>
    </citation>
    <scope>NUCLEOTIDE SEQUENCE [LARGE SCALE GENOMIC DNA]</scope>
    <source>
        <strain evidence="15">Bristol N2</strain>
    </source>
</reference>
<reference key="4">
    <citation type="journal article" date="1990" name="Nucleic Acids Res.">
        <title>Cloning and analysis of three new homeobox genes from the nematode Caenorhabditis elegans.</title>
        <authorList>
            <person name="Schaller D."/>
            <person name="Wittmann C."/>
            <person name="Spicher A."/>
            <person name="Mueller F."/>
            <person name="Tobler H."/>
        </authorList>
    </citation>
    <scope>NUCLEOTIDE SEQUENCE [GENOMIC DNA] OF 111-185</scope>
</reference>
<reference key="5">
    <citation type="journal article" date="1989" name="Genetics">
        <title>Caenorhabditis elegans mutants defective in the functioning of the motor neurons responsible for egg laying.</title>
        <authorList>
            <person name="Desai C."/>
            <person name="Horvitz H.R."/>
        </authorList>
    </citation>
    <scope>MUTAGENESIS OF ARG-163</scope>
</reference>
<reference key="6">
    <citation type="journal article" date="1991" name="Development">
        <title>Control of cell fate in the tail region of C. elegans by the gene egl-5.</title>
        <authorList>
            <person name="Chisholm A."/>
        </authorList>
    </citation>
    <scope>FUNCTION</scope>
    <scope>MUTAGENESIS OF ARG-163</scope>
</reference>
<reference key="7">
    <citation type="journal article" date="1999" name="Dev. Biol.">
        <title>Patterning of Caenorhabditis elegans posterior structures by the Abdominal-B homolog, egl-5.</title>
        <authorList>
            <person name="Ferreira H.B."/>
            <person name="Zhang Y."/>
            <person name="Zhao C."/>
            <person name="Emmons S.W."/>
        </authorList>
    </citation>
    <scope>FUNCTION</scope>
    <scope>DEVELOPMENTAL STAGE</scope>
    <scope>MUTAGENESIS OF ARG-163</scope>
</reference>
<reference key="8">
    <citation type="journal article" date="2003" name="Development">
        <title>The Caenorhabditis elegans spalt-like gene sem-4 restricts touch cell fate by repressing the selector Hox gene egl-5 and the effector gene mec-3.</title>
        <authorList>
            <person name="Toker A.S."/>
            <person name="Teng Y."/>
            <person name="Ferreira H.B."/>
            <person name="Emmons S.W."/>
            <person name="Chalfie M."/>
        </authorList>
    </citation>
    <scope>FUNCTION</scope>
    <scope>MUTAGENESIS OF ARG-163</scope>
</reference>
<reference key="9">
    <citation type="journal article" date="2007" name="Dev. Biol.">
        <title>Transcription factor NFY globally represses the expression of the C. elegans Hox gene Abdominal-B homolog egl-5.</title>
        <authorList>
            <person name="Deng H."/>
            <person name="Sun Y."/>
            <person name="Zhang Y."/>
            <person name="Luo X."/>
            <person name="Hou W."/>
            <person name="Yan L."/>
            <person name="Chen Y."/>
            <person name="Tian E."/>
            <person name="Han J."/>
            <person name="Zhang H."/>
        </authorList>
    </citation>
    <scope>DEVELOPMENTAL STAGE</scope>
</reference>
<reference key="10">
    <citation type="journal article" date="2008" name="Genetics">
        <title>The T-box gene tbx-2, the homeobox gene egl-5 and the asymmetric cell division gene ham-1 specify neural fate in the HSN/PHB lineage.</title>
        <authorList>
            <person name="Singhvi A."/>
            <person name="Frank C.A."/>
            <person name="Garriga G."/>
        </authorList>
    </citation>
    <scope>FUNCTION</scope>
</reference>
<reference key="11">
    <citation type="journal article" date="2009" name="Dev. Biol.">
        <title>The C. elegans Hox gene egl-5 is required for correct development of the hermaphrodite hindgut and for the response to rectal infection by Microbacterium nematophilum.</title>
        <authorList>
            <person name="Nicholas H.R."/>
            <person name="Hodgkin J."/>
        </authorList>
    </citation>
    <scope>FUNCTION</scope>
    <scope>DISRUPTION PHENOTYPE</scope>
</reference>
<reference key="12">
    <citation type="journal article" date="2010" name="Dev. Biol.">
        <title>EGL-5/ABD-B plays an instructive role in male cell fate determination in the C. elegans somatic gonad.</title>
        <authorList>
            <person name="Kalis A.K."/>
            <person name="Murphy M.W."/>
            <person name="Zarkower D."/>
        </authorList>
    </citation>
    <scope>FUNCTION</scope>
    <scope>INTERACTION WITH POP-1</scope>
    <scope>DEVELOPMENTAL STAGE</scope>
    <scope>MUTAGENESIS OF ARG-163</scope>
</reference>
<dbReference type="EMBL" id="L19247">
    <property type="protein sequence ID" value="AAC37166.1"/>
    <property type="molecule type" value="mRNA"/>
</dbReference>
<dbReference type="EMBL" id="BX284603">
    <property type="protein sequence ID" value="CCD63638.1"/>
    <property type="molecule type" value="Genomic_DNA"/>
</dbReference>
<dbReference type="EMBL" id="BX284603">
    <property type="protein sequence ID" value="CCD63639.1"/>
    <property type="molecule type" value="Genomic_DNA"/>
</dbReference>
<dbReference type="EMBL" id="BX284603">
    <property type="protein sequence ID" value="CCD63640.1"/>
    <property type="molecule type" value="Genomic_DNA"/>
</dbReference>
<dbReference type="EMBL" id="X17075">
    <property type="protein sequence ID" value="CAA34927.1"/>
    <property type="molecule type" value="Genomic_DNA"/>
</dbReference>
<dbReference type="PIR" id="A40722">
    <property type="entry name" value="A40722"/>
</dbReference>
<dbReference type="PIR" id="S44613">
    <property type="entry name" value="S44613"/>
</dbReference>
<dbReference type="RefSeq" id="NP_001021166.1">
    <molecule id="P17486-1"/>
    <property type="nucleotide sequence ID" value="NM_001025995.3"/>
</dbReference>
<dbReference type="RefSeq" id="NP_001021167.1">
    <molecule id="P17486-3"/>
    <property type="nucleotide sequence ID" value="NM_001025996.3"/>
</dbReference>
<dbReference type="RefSeq" id="NP_498697.3">
    <molecule id="P17486-2"/>
    <property type="nucleotide sequence ID" value="NM_066296.4"/>
</dbReference>
<dbReference type="SMR" id="P17486"/>
<dbReference type="BioGRID" id="41301">
    <property type="interactions" value="2"/>
</dbReference>
<dbReference type="FunCoup" id="P17486">
    <property type="interactions" value="87"/>
</dbReference>
<dbReference type="STRING" id="6239.C08C3.1b.1"/>
<dbReference type="PaxDb" id="6239-C08C3.1b"/>
<dbReference type="EnsemblMetazoa" id="C08C3.1a.1">
    <molecule id="P17486-2"/>
    <property type="protein sequence ID" value="C08C3.1a.1"/>
    <property type="gene ID" value="WBGene00001174"/>
</dbReference>
<dbReference type="EnsemblMetazoa" id="C08C3.1b.1">
    <molecule id="P17486-1"/>
    <property type="protein sequence ID" value="C08C3.1b.1"/>
    <property type="gene ID" value="WBGene00001174"/>
</dbReference>
<dbReference type="EnsemblMetazoa" id="C08C3.1c.1">
    <molecule id="P17486-3"/>
    <property type="protein sequence ID" value="C08C3.1c.1"/>
    <property type="gene ID" value="WBGene00001174"/>
</dbReference>
<dbReference type="GeneID" id="176093"/>
<dbReference type="KEGG" id="cel:CELE_C08C3.1"/>
<dbReference type="UCSC" id="C08C3.1b">
    <molecule id="P17486-1"/>
    <property type="organism name" value="c. elegans"/>
</dbReference>
<dbReference type="AGR" id="WB:WBGene00001174"/>
<dbReference type="CTD" id="176093"/>
<dbReference type="WormBase" id="C08C3.1a">
    <molecule id="P17486-2"/>
    <property type="protein sequence ID" value="CE29076"/>
    <property type="gene ID" value="WBGene00001174"/>
    <property type="gene designation" value="egl-5"/>
</dbReference>
<dbReference type="WormBase" id="C08C3.1b">
    <molecule id="P17486-1"/>
    <property type="protein sequence ID" value="CE32792"/>
    <property type="gene ID" value="WBGene00001174"/>
    <property type="gene designation" value="egl-5"/>
</dbReference>
<dbReference type="WormBase" id="C08C3.1c">
    <molecule id="P17486-3"/>
    <property type="protein sequence ID" value="CE34523"/>
    <property type="gene ID" value="WBGene00001174"/>
    <property type="gene designation" value="egl-5"/>
</dbReference>
<dbReference type="eggNOG" id="KOG0489">
    <property type="taxonomic scope" value="Eukaryota"/>
</dbReference>
<dbReference type="GeneTree" id="ENSGT00940000175004"/>
<dbReference type="InParanoid" id="P17486"/>
<dbReference type="OMA" id="PHWPNYA"/>
<dbReference type="OrthoDB" id="6159439at2759"/>
<dbReference type="PhylomeDB" id="P17486"/>
<dbReference type="SignaLink" id="P17486"/>
<dbReference type="PRO" id="PR:P17486"/>
<dbReference type="Proteomes" id="UP000001940">
    <property type="component" value="Chromosome III"/>
</dbReference>
<dbReference type="Bgee" id="WBGene00001174">
    <property type="expression patterns" value="Expressed in embryo and 3 other cell types or tissues"/>
</dbReference>
<dbReference type="GO" id="GO:0005634">
    <property type="term" value="C:nucleus"/>
    <property type="evidence" value="ECO:0000314"/>
    <property type="project" value="WormBase"/>
</dbReference>
<dbReference type="GO" id="GO:0000981">
    <property type="term" value="F:DNA-binding transcription factor activity, RNA polymerase II-specific"/>
    <property type="evidence" value="ECO:0000318"/>
    <property type="project" value="GO_Central"/>
</dbReference>
<dbReference type="GO" id="GO:0000978">
    <property type="term" value="F:RNA polymerase II cis-regulatory region sequence-specific DNA binding"/>
    <property type="evidence" value="ECO:0000318"/>
    <property type="project" value="GO_Central"/>
</dbReference>
<dbReference type="GO" id="GO:0061629">
    <property type="term" value="F:RNA polymerase II-specific DNA-binding transcription factor binding"/>
    <property type="evidence" value="ECO:0000353"/>
    <property type="project" value="WormBase"/>
</dbReference>
<dbReference type="GO" id="GO:0009952">
    <property type="term" value="P:anterior/posterior pattern specification"/>
    <property type="evidence" value="ECO:0000315"/>
    <property type="project" value="UniProtKB"/>
</dbReference>
<dbReference type="GO" id="GO:0001708">
    <property type="term" value="P:cell fate specification"/>
    <property type="evidence" value="ECO:0000315"/>
    <property type="project" value="UniProtKB"/>
</dbReference>
<dbReference type="GO" id="GO:0042742">
    <property type="term" value="P:defense response to bacterium"/>
    <property type="evidence" value="ECO:0000315"/>
    <property type="project" value="UniProtKB"/>
</dbReference>
<dbReference type="GO" id="GO:0061525">
    <property type="term" value="P:hindgut development"/>
    <property type="evidence" value="ECO:0000315"/>
    <property type="project" value="UniProtKB"/>
</dbReference>
<dbReference type="GO" id="GO:0000122">
    <property type="term" value="P:negative regulation of transcription by RNA polymerase II"/>
    <property type="evidence" value="ECO:0000315"/>
    <property type="project" value="WormBase"/>
</dbReference>
<dbReference type="GO" id="GO:0045138">
    <property type="term" value="P:nematode male tail tip morphogenesis"/>
    <property type="evidence" value="ECO:0000315"/>
    <property type="project" value="WormBase"/>
</dbReference>
<dbReference type="GO" id="GO:0001764">
    <property type="term" value="P:neuron migration"/>
    <property type="evidence" value="ECO:0000315"/>
    <property type="project" value="UniProtKB"/>
</dbReference>
<dbReference type="GO" id="GO:0045944">
    <property type="term" value="P:positive regulation of transcription by RNA polymerase II"/>
    <property type="evidence" value="ECO:0000315"/>
    <property type="project" value="WormBase"/>
</dbReference>
<dbReference type="GO" id="GO:0030155">
    <property type="term" value="P:regulation of cell adhesion"/>
    <property type="evidence" value="ECO:0000315"/>
    <property type="project" value="WormBase"/>
</dbReference>
<dbReference type="CDD" id="cd00086">
    <property type="entry name" value="homeodomain"/>
    <property type="match status" value="1"/>
</dbReference>
<dbReference type="FunFam" id="1.10.10.60:FF:000523">
    <property type="entry name" value="Homeobox protein egl-5"/>
    <property type="match status" value="1"/>
</dbReference>
<dbReference type="Gene3D" id="1.10.10.60">
    <property type="entry name" value="Homeodomain-like"/>
    <property type="match status" value="1"/>
</dbReference>
<dbReference type="InterPro" id="IPR050296">
    <property type="entry name" value="Antp_homeobox"/>
</dbReference>
<dbReference type="InterPro" id="IPR001356">
    <property type="entry name" value="HD"/>
</dbReference>
<dbReference type="InterPro" id="IPR020479">
    <property type="entry name" value="HD_metazoa"/>
</dbReference>
<dbReference type="InterPro" id="IPR017970">
    <property type="entry name" value="Homeobox_CS"/>
</dbReference>
<dbReference type="InterPro" id="IPR009057">
    <property type="entry name" value="Homeodomain-like_sf"/>
</dbReference>
<dbReference type="PANTHER" id="PTHR45659:SF4">
    <property type="entry name" value="HOMEOBOX PROTEIN ABDOMINAL-A"/>
    <property type="match status" value="1"/>
</dbReference>
<dbReference type="PANTHER" id="PTHR45659">
    <property type="entry name" value="HOMEOBOX PROTEIN HOX"/>
    <property type="match status" value="1"/>
</dbReference>
<dbReference type="Pfam" id="PF00046">
    <property type="entry name" value="Homeodomain"/>
    <property type="match status" value="1"/>
</dbReference>
<dbReference type="PRINTS" id="PR00024">
    <property type="entry name" value="HOMEOBOX"/>
</dbReference>
<dbReference type="SMART" id="SM00389">
    <property type="entry name" value="HOX"/>
    <property type="match status" value="1"/>
</dbReference>
<dbReference type="SUPFAM" id="SSF46689">
    <property type="entry name" value="Homeodomain-like"/>
    <property type="match status" value="1"/>
</dbReference>
<dbReference type="PROSITE" id="PS00027">
    <property type="entry name" value="HOMEOBOX_1"/>
    <property type="match status" value="1"/>
</dbReference>
<dbReference type="PROSITE" id="PS50071">
    <property type="entry name" value="HOMEOBOX_2"/>
    <property type="match status" value="1"/>
</dbReference>
<protein>
    <recommendedName>
        <fullName evidence="14">Homeobox protein egl-5</fullName>
    </recommendedName>
    <alternativeName>
        <fullName evidence="12 13">Abdominal-B homolog egl-5</fullName>
    </alternativeName>
    <alternativeName>
        <fullName evidence="17">Egg-laying defective protein 5</fullName>
    </alternativeName>
    <alternativeName>
        <fullName evidence="17">Homeobox protein ceh-11</fullName>
    </alternativeName>
</protein>
<gene>
    <name evidence="17" type="primary">egl-5</name>
    <name evidence="17" type="synonym">ceh-11</name>
    <name evidence="17" type="ORF">C08C3.1</name>
</gene>
<evidence type="ECO:0000255" key="1">
    <source>
        <dbReference type="PROSITE-ProRule" id="PRU00108"/>
    </source>
</evidence>
<evidence type="ECO:0000256" key="2">
    <source>
        <dbReference type="SAM" id="MobiDB-lite"/>
    </source>
</evidence>
<evidence type="ECO:0000269" key="3">
    <source>
    </source>
</evidence>
<evidence type="ECO:0000269" key="4">
    <source>
    </source>
</evidence>
<evidence type="ECO:0000269" key="5">
    <source>
    </source>
</evidence>
<evidence type="ECO:0000269" key="6">
    <source>
    </source>
</evidence>
<evidence type="ECO:0000269" key="7">
    <source>
    </source>
</evidence>
<evidence type="ECO:0000269" key="8">
    <source>
    </source>
</evidence>
<evidence type="ECO:0000269" key="9">
    <source>
    </source>
</evidence>
<evidence type="ECO:0000269" key="10">
    <source>
    </source>
</evidence>
<evidence type="ECO:0000269" key="11">
    <source>
    </source>
</evidence>
<evidence type="ECO:0000303" key="12">
    <source>
    </source>
</evidence>
<evidence type="ECO:0000303" key="13">
    <source>
    </source>
</evidence>
<evidence type="ECO:0000305" key="14"/>
<evidence type="ECO:0000312" key="15">
    <source>
        <dbReference type="Proteomes" id="UP000001940"/>
    </source>
</evidence>
<evidence type="ECO:0000312" key="16">
    <source>
        <dbReference type="WormBase" id="C08C3.1a"/>
    </source>
</evidence>
<evidence type="ECO:0000312" key="17">
    <source>
        <dbReference type="WormBase" id="C08C3.1b"/>
    </source>
</evidence>
<evidence type="ECO:0000312" key="18">
    <source>
        <dbReference type="WormBase" id="C08C3.1c"/>
    </source>
</evidence>
<keyword id="KW-0025">Alternative splicing</keyword>
<keyword id="KW-0217">Developmental protein</keyword>
<keyword id="KW-0238">DNA-binding</keyword>
<keyword id="KW-0371">Homeobox</keyword>
<keyword id="KW-0539">Nucleus</keyword>
<keyword id="KW-1185">Reference proteome</keyword>
<accession>P17486</accession>
<accession>Q21061</accession>
<accession>Q7YZV2</accession>
<name>EGL5_CAEEL</name>
<sequence length="223" mass="25144">MNTSTSAFDFGSSTASSAATSTTSSQPDANDHLSRLAAMTQGVGKEDPETSSTPSTEASLYPGISAAYMQSYGWPQNYNYFGQPLGPATFPGWPQCYPNTAWPNYGELFASSKKGRQTYQRYQTSVLEAKFQQSSYVSKKQREELRLQTQLTDRQIKIWFQNRRMKAKKEKQRVDDHTEHTPLLPANPPKGMGMDMDDEKKWQMAHWPPAAAHNPYQYPLCPP</sequence>
<feature type="chain" id="PRO_0000048865" description="Homeobox protein egl-5">
    <location>
        <begin position="1"/>
        <end position="223"/>
    </location>
</feature>
<feature type="DNA-binding region" description="Homeobox" evidence="1">
    <location>
        <begin position="112"/>
        <end position="171"/>
    </location>
</feature>
<feature type="region of interest" description="Disordered" evidence="2">
    <location>
        <begin position="1"/>
        <end position="58"/>
    </location>
</feature>
<feature type="region of interest" description="Disordered" evidence="2">
    <location>
        <begin position="168"/>
        <end position="191"/>
    </location>
</feature>
<feature type="compositionally biased region" description="Low complexity" evidence="2">
    <location>
        <begin position="1"/>
        <end position="25"/>
    </location>
</feature>
<feature type="splice variant" id="VSP_015688" description="In isoform c." evidence="14">
    <original>GI</original>
    <variation>V</variation>
    <location>
        <begin position="63"/>
        <end position="64"/>
    </location>
</feature>
<feature type="splice variant" id="VSP_015689" description="In isoform a." evidence="14">
    <location>
        <begin position="106"/>
        <end position="109"/>
    </location>
</feature>
<feature type="mutagenesis site" description="In n486; egg-laying defects. Hermaphrodite-specific neurons (HSN) are absent or misplaced. Males do not produce progeny and often display gross abnormalities of tail morphology. Abnormal development of the male-specific genital sensilla (simple sense organs), known as rays. Defects in rectal epithelium, including, in males, absent or grossly abnormal spicules, gubernaculum, and proctodeal chamber and, in both males and hermaphrodites, defects in defecation. Insensitive to both light and heavy touch in the tail. Alters the fates of PLM touch neurons; substantially reduces expression of mec-3 and causes abnormal morphology. Defects in the posterior ventral neuroectoderm. Male somatic gonad is grossly abnormal and exhibits gene expression typical of adult hermaphrodite gonad, but there are no obvious gonadal defects in the hermaphrodite." evidence="3 4 7 9 10 11">
    <original>R</original>
    <variation>C</variation>
    <location>
        <position position="163"/>
    </location>
</feature>
<organism evidence="15">
    <name type="scientific">Caenorhabditis elegans</name>
    <dbReference type="NCBI Taxonomy" id="6239"/>
    <lineage>
        <taxon>Eukaryota</taxon>
        <taxon>Metazoa</taxon>
        <taxon>Ecdysozoa</taxon>
        <taxon>Nematoda</taxon>
        <taxon>Chromadorea</taxon>
        <taxon>Rhabditida</taxon>
        <taxon>Rhabditina</taxon>
        <taxon>Rhabditomorpha</taxon>
        <taxon>Rhabditoidea</taxon>
        <taxon>Rhabditidae</taxon>
        <taxon>Peloderinae</taxon>
        <taxon>Caenorhabditis</taxon>
    </lineage>
</organism>
<proteinExistence type="evidence at protein level"/>